<evidence type="ECO:0000250" key="1"/>
<evidence type="ECO:0000250" key="2">
    <source>
        <dbReference type="UniProtKB" id="P32467"/>
    </source>
</evidence>
<evidence type="ECO:0000255" key="3"/>
<evidence type="ECO:0000256" key="4">
    <source>
        <dbReference type="SAM" id="MobiDB-lite"/>
    </source>
</evidence>
<evidence type="ECO:0000305" key="5"/>
<feature type="chain" id="PRO_0000392109" description="Low-affinity glucose transporter HXT4">
    <location>
        <begin position="1"/>
        <end position="576"/>
    </location>
</feature>
<feature type="topological domain" description="Cytoplasmic" evidence="3">
    <location>
        <begin position="1"/>
        <end position="66"/>
    </location>
</feature>
<feature type="transmembrane region" description="Helical; Name=1" evidence="3">
    <location>
        <begin position="67"/>
        <end position="87"/>
    </location>
</feature>
<feature type="topological domain" description="Extracellular" evidence="3">
    <location>
        <begin position="88"/>
        <end position="122"/>
    </location>
</feature>
<feature type="transmembrane region" description="Helical; Name=2" evidence="3">
    <location>
        <begin position="123"/>
        <end position="143"/>
    </location>
</feature>
<feature type="topological domain" description="Cytoplasmic" evidence="3">
    <location>
        <begin position="144"/>
        <end position="149"/>
    </location>
</feature>
<feature type="transmembrane region" description="Helical; Name=3" evidence="3">
    <location>
        <begin position="150"/>
        <end position="170"/>
    </location>
</feature>
<feature type="topological domain" description="Extracellular" evidence="3">
    <location>
        <begin position="171"/>
        <end position="180"/>
    </location>
</feature>
<feature type="transmembrane region" description="Helical; Name=4" evidence="3">
    <location>
        <begin position="181"/>
        <end position="201"/>
    </location>
</feature>
<feature type="topological domain" description="Cytoplasmic" evidence="3">
    <location>
        <begin position="202"/>
        <end position="207"/>
    </location>
</feature>
<feature type="transmembrane region" description="Helical; Name=5" evidence="3">
    <location>
        <begin position="208"/>
        <end position="228"/>
    </location>
</feature>
<feature type="topological domain" description="Extracellular" evidence="3">
    <location>
        <begin position="229"/>
        <end position="242"/>
    </location>
</feature>
<feature type="transmembrane region" description="Helical; Name=6" evidence="3">
    <location>
        <begin position="243"/>
        <end position="263"/>
    </location>
</feature>
<feature type="topological domain" description="Cytoplasmic" evidence="3">
    <location>
        <begin position="264"/>
        <end position="346"/>
    </location>
</feature>
<feature type="transmembrane region" description="Helical; Name=7" evidence="3">
    <location>
        <begin position="347"/>
        <end position="363"/>
    </location>
</feature>
<feature type="topological domain" description="Extracellular" evidence="3">
    <location>
        <begin position="364"/>
        <end position="369"/>
    </location>
</feature>
<feature type="transmembrane region" description="Helical; Name=8" evidence="3">
    <location>
        <begin position="370"/>
        <end position="387"/>
    </location>
</feature>
<feature type="topological domain" description="Cytoplasmic" evidence="3">
    <location>
        <begin position="388"/>
        <end position="394"/>
    </location>
</feature>
<feature type="transmembrane region" description="Helical; Name=9" evidence="3">
    <location>
        <begin position="395"/>
        <end position="415"/>
    </location>
</feature>
<feature type="topological domain" description="Extracellular" evidence="3">
    <location>
        <begin position="416"/>
        <end position="437"/>
    </location>
</feature>
<feature type="transmembrane region" description="Helical; Name=10" evidence="3">
    <location>
        <begin position="438"/>
        <end position="458"/>
    </location>
</feature>
<feature type="topological domain" description="Cytoplasmic" evidence="3">
    <location>
        <begin position="459"/>
        <end position="475"/>
    </location>
</feature>
<feature type="transmembrane region" description="Helical; Name=11" evidence="3">
    <location>
        <begin position="476"/>
        <end position="496"/>
    </location>
</feature>
<feature type="topological domain" description="Extracellular" evidence="3">
    <location>
        <position position="497"/>
    </location>
</feature>
<feature type="transmembrane region" description="Helical; Name=12" evidence="3">
    <location>
        <begin position="498"/>
        <end position="518"/>
    </location>
</feature>
<feature type="topological domain" description="Cytoplasmic" evidence="3">
    <location>
        <begin position="519"/>
        <end position="576"/>
    </location>
</feature>
<feature type="region of interest" description="Disordered" evidence="4">
    <location>
        <begin position="1"/>
        <end position="56"/>
    </location>
</feature>
<feature type="compositionally biased region" description="Polar residues" evidence="4">
    <location>
        <begin position="25"/>
        <end position="37"/>
    </location>
</feature>
<feature type="compositionally biased region" description="Basic and acidic residues" evidence="4">
    <location>
        <begin position="38"/>
        <end position="54"/>
    </location>
</feature>
<feature type="glycosylation site" description="N-linked (GlcNAc...) asparagine" evidence="3">
    <location>
        <position position="425"/>
    </location>
</feature>
<feature type="cross-link" description="Glycyl lysine isopeptide (Lys-Gly) (interchain with G-Cter in ubiquitin)" evidence="2">
    <location>
        <position position="45"/>
    </location>
</feature>
<comment type="function">
    <text evidence="1">Low-affinity glucose transporter. Can also transport xylose (By similarity).</text>
</comment>
<comment type="activity regulation">
    <text evidence="1">Xylose uptake is strongly inhibited by glucose.</text>
</comment>
<comment type="subcellular location">
    <subcellularLocation>
        <location evidence="5">Cell membrane</location>
        <topology>Multi-pass membrane protein</topology>
    </subcellularLocation>
</comment>
<comment type="miscellaneous">
    <text>Glucose transport is thought to be mediated by two kinetically distinct systems, a glucose-repressible high-affinity system and a constitutive low-affinity system.</text>
</comment>
<comment type="similarity">
    <text evidence="5">Belongs to the major facilitator superfamily. Sugar transporter (TC 2.A.1.1) family.</text>
</comment>
<dbReference type="EMBL" id="AAFW02000082">
    <property type="protein sequence ID" value="EDN62333.1"/>
    <property type="molecule type" value="Genomic_DNA"/>
</dbReference>
<dbReference type="SMR" id="A6ZT02"/>
<dbReference type="GlyCosmos" id="A6ZT02">
    <property type="glycosylation" value="1 site, No reported glycans"/>
</dbReference>
<dbReference type="HOGENOM" id="CLU_001265_30_1_1"/>
<dbReference type="Proteomes" id="UP000007060">
    <property type="component" value="Unassembled WGS sequence"/>
</dbReference>
<dbReference type="GO" id="GO:0005886">
    <property type="term" value="C:plasma membrane"/>
    <property type="evidence" value="ECO:0007669"/>
    <property type="project" value="UniProtKB-SubCell"/>
</dbReference>
<dbReference type="GO" id="GO:0005351">
    <property type="term" value="F:carbohydrate:proton symporter activity"/>
    <property type="evidence" value="ECO:0007669"/>
    <property type="project" value="TreeGrafter"/>
</dbReference>
<dbReference type="GO" id="GO:0055056">
    <property type="term" value="F:D-glucose transmembrane transporter activity"/>
    <property type="evidence" value="ECO:0007669"/>
    <property type="project" value="UniProtKB-ARBA"/>
</dbReference>
<dbReference type="CDD" id="cd17356">
    <property type="entry name" value="MFS_HXT"/>
    <property type="match status" value="1"/>
</dbReference>
<dbReference type="FunFam" id="1.20.1250.20:FF:000044">
    <property type="entry name" value="Hexose transporter Hxt3p"/>
    <property type="match status" value="1"/>
</dbReference>
<dbReference type="Gene3D" id="1.20.1250.20">
    <property type="entry name" value="MFS general substrate transporter like domains"/>
    <property type="match status" value="1"/>
</dbReference>
<dbReference type="InterPro" id="IPR020846">
    <property type="entry name" value="MFS_dom"/>
</dbReference>
<dbReference type="InterPro" id="IPR005828">
    <property type="entry name" value="MFS_sugar_transport-like"/>
</dbReference>
<dbReference type="InterPro" id="IPR050360">
    <property type="entry name" value="MFS_Sugar_Transporters"/>
</dbReference>
<dbReference type="InterPro" id="IPR036259">
    <property type="entry name" value="MFS_trans_sf"/>
</dbReference>
<dbReference type="InterPro" id="IPR003663">
    <property type="entry name" value="Sugar/inositol_transpt"/>
</dbReference>
<dbReference type="InterPro" id="IPR005829">
    <property type="entry name" value="Sugar_transporter_CS"/>
</dbReference>
<dbReference type="NCBIfam" id="TIGR00879">
    <property type="entry name" value="SP"/>
    <property type="match status" value="1"/>
</dbReference>
<dbReference type="PANTHER" id="PTHR48022:SF75">
    <property type="entry name" value="GALACTOSE TRANSPORTER-RELATED"/>
    <property type="match status" value="1"/>
</dbReference>
<dbReference type="PANTHER" id="PTHR48022">
    <property type="entry name" value="PLASTIDIC GLUCOSE TRANSPORTER 4"/>
    <property type="match status" value="1"/>
</dbReference>
<dbReference type="Pfam" id="PF00083">
    <property type="entry name" value="Sugar_tr"/>
    <property type="match status" value="1"/>
</dbReference>
<dbReference type="PRINTS" id="PR00171">
    <property type="entry name" value="SUGRTRNSPORT"/>
</dbReference>
<dbReference type="SUPFAM" id="SSF103473">
    <property type="entry name" value="MFS general substrate transporter"/>
    <property type="match status" value="1"/>
</dbReference>
<dbReference type="PROSITE" id="PS50850">
    <property type="entry name" value="MFS"/>
    <property type="match status" value="1"/>
</dbReference>
<dbReference type="PROSITE" id="PS00216">
    <property type="entry name" value="SUGAR_TRANSPORT_1"/>
    <property type="match status" value="1"/>
</dbReference>
<dbReference type="PROSITE" id="PS00217">
    <property type="entry name" value="SUGAR_TRANSPORT_2"/>
    <property type="match status" value="1"/>
</dbReference>
<keyword id="KW-1003">Cell membrane</keyword>
<keyword id="KW-0325">Glycoprotein</keyword>
<keyword id="KW-1017">Isopeptide bond</keyword>
<keyword id="KW-0472">Membrane</keyword>
<keyword id="KW-0677">Repeat</keyword>
<keyword id="KW-0762">Sugar transport</keyword>
<keyword id="KW-0812">Transmembrane</keyword>
<keyword id="KW-1133">Transmembrane helix</keyword>
<keyword id="KW-0813">Transport</keyword>
<keyword id="KW-0832">Ubl conjugation</keyword>
<sequence length="576" mass="63938">MSEEAAYQEDTAVQNTPADALSPVESDSNSALSTPSNKAERDDMKDFDENHEESNNYVEIPKKPASAYVTVSICCLMVAFGGFVFGWDTGTISGFVAQTDFIRRFGMKHHDGTYYLSKVRTGLIVSIFNIGCAIGGIILARLGDMYGRKMGLIVVVVIYIIGIIIQIASINKWYQYFIGRIISGLGVGGIAVLSPMLISEVSPKHIRGTLVSCYQLMITLGIFLGYCTNYGTKTYTNSVQWRVPLGLGFAWALFMIGGMTFVPESPRYLVEVGKIEEAKRSIALSNKVSADDPAVMAEVEVVQATVEAEKLAGNASWGEIFSTKTKVFQRLIMGAMIQSLQQLTGDNYFFYYGTTVFTAVGLEDSFETSIVLGIVNFASTFVGIFLVERYGRRRCLLWGAASMTACMVVFASVGVTRLWPNGKKNGSSKGAGNCMIVFTCFYLFCFATTWAPIPFVVNSETFPLRVKSKCMAIAQACNWIWGFLIGFFTPFISGAIDFYYGYVFMGCLVFSYFYVFFFVPETKGLTLEEVNTLWEEGVLPWKSPSWVPPNKRGTDYNADDLMHDDQPFYKKMFGKK</sequence>
<name>HXT4_YEAS7</name>
<accession>A6ZT02</accession>
<reference key="1">
    <citation type="journal article" date="2007" name="Proc. Natl. Acad. Sci. U.S.A.">
        <title>Genome sequencing and comparative analysis of Saccharomyces cerevisiae strain YJM789.</title>
        <authorList>
            <person name="Wei W."/>
            <person name="McCusker J.H."/>
            <person name="Hyman R.W."/>
            <person name="Jones T."/>
            <person name="Ning Y."/>
            <person name="Cao Z."/>
            <person name="Gu Z."/>
            <person name="Bruno D."/>
            <person name="Miranda M."/>
            <person name="Nguyen M."/>
            <person name="Wilhelmy J."/>
            <person name="Komp C."/>
            <person name="Tamse R."/>
            <person name="Wang X."/>
            <person name="Jia P."/>
            <person name="Luedi P."/>
            <person name="Oefner P.J."/>
            <person name="David L."/>
            <person name="Dietrich F.S."/>
            <person name="Li Y."/>
            <person name="Davis R.W."/>
            <person name="Steinmetz L.M."/>
        </authorList>
    </citation>
    <scope>NUCLEOTIDE SEQUENCE [LARGE SCALE GENOMIC DNA]</scope>
    <source>
        <strain>YJM789</strain>
    </source>
</reference>
<organism>
    <name type="scientific">Saccharomyces cerevisiae (strain YJM789)</name>
    <name type="common">Baker's yeast</name>
    <dbReference type="NCBI Taxonomy" id="307796"/>
    <lineage>
        <taxon>Eukaryota</taxon>
        <taxon>Fungi</taxon>
        <taxon>Dikarya</taxon>
        <taxon>Ascomycota</taxon>
        <taxon>Saccharomycotina</taxon>
        <taxon>Saccharomycetes</taxon>
        <taxon>Saccharomycetales</taxon>
        <taxon>Saccharomycetaceae</taxon>
        <taxon>Saccharomyces</taxon>
    </lineage>
</organism>
<protein>
    <recommendedName>
        <fullName>Low-affinity glucose transporter HXT4</fullName>
    </recommendedName>
    <alternativeName>
        <fullName>Low-affinity glucose transporter LGT1</fullName>
    </alternativeName>
</protein>
<gene>
    <name type="primary">HXT4</name>
    <name type="synonym">LGT1</name>
    <name type="synonym">RAG1</name>
    <name type="ORF">SCY_2486</name>
</gene>
<proteinExistence type="inferred from homology"/>